<proteinExistence type="inferred from homology"/>
<reference key="1">
    <citation type="journal article" date="2011" name="J. Bacteriol.">
        <title>Genome sequence of lineage III Listeria monocytogenes strain HCC23.</title>
        <authorList>
            <person name="Steele C.L."/>
            <person name="Donaldson J.R."/>
            <person name="Paul D."/>
            <person name="Banes M.M."/>
            <person name="Arick T."/>
            <person name="Bridges S.M."/>
            <person name="Lawrence M.L."/>
        </authorList>
    </citation>
    <scope>NUCLEOTIDE SEQUENCE [LARGE SCALE GENOMIC DNA]</scope>
    <source>
        <strain>HCC23</strain>
    </source>
</reference>
<accession>B8DBU5</accession>
<sequence>MTKVYYEDAVKNNALEGKTVAVIGYGSQGHAHSQNLRDNGNNVIIGIREGKSAESARNDGFDVYSVSEAAEKADVIMILLPDETQGETYENEIKPNLKAGNALVFAHGFNIHFDVINPPSDVDVFLVAPKGPGHLVRRTFVEGGAVPSLFAIYQDATGNARDTALSYAKGIGATRAGVIETTFKEETETDLFGEQAVLCGGATHLIQAGFETLVEAGYQPELAYFEVLHEMKLIVDLMYEGGMEKMRHSISNTAEYGDYVSGPRVVTADTKKAMKEVLTDIQNGNFAKSFIDDNKNGFKEFHRMRKEQQGHQIEKVGAELREMMPFVKPQH</sequence>
<organism>
    <name type="scientific">Listeria monocytogenes serotype 4a (strain HCC23)</name>
    <dbReference type="NCBI Taxonomy" id="552536"/>
    <lineage>
        <taxon>Bacteria</taxon>
        <taxon>Bacillati</taxon>
        <taxon>Bacillota</taxon>
        <taxon>Bacilli</taxon>
        <taxon>Bacillales</taxon>
        <taxon>Listeriaceae</taxon>
        <taxon>Listeria</taxon>
    </lineage>
</organism>
<dbReference type="EC" id="1.1.1.86" evidence="1"/>
<dbReference type="EMBL" id="CP001175">
    <property type="protein sequence ID" value="ACK38931.1"/>
    <property type="molecule type" value="Genomic_DNA"/>
</dbReference>
<dbReference type="RefSeq" id="WP_003727977.1">
    <property type="nucleotide sequence ID" value="NC_011660.1"/>
</dbReference>
<dbReference type="SMR" id="B8DBU5"/>
<dbReference type="GeneID" id="93235432"/>
<dbReference type="KEGG" id="lmh:LMHCC_0574"/>
<dbReference type="HOGENOM" id="CLU_033821_0_1_9"/>
<dbReference type="UniPathway" id="UPA00047">
    <property type="reaction ID" value="UER00056"/>
</dbReference>
<dbReference type="UniPathway" id="UPA00049">
    <property type="reaction ID" value="UER00060"/>
</dbReference>
<dbReference type="GO" id="GO:0005829">
    <property type="term" value="C:cytosol"/>
    <property type="evidence" value="ECO:0007669"/>
    <property type="project" value="TreeGrafter"/>
</dbReference>
<dbReference type="GO" id="GO:0004455">
    <property type="term" value="F:ketol-acid reductoisomerase activity"/>
    <property type="evidence" value="ECO:0007669"/>
    <property type="project" value="UniProtKB-UniRule"/>
</dbReference>
<dbReference type="GO" id="GO:0000287">
    <property type="term" value="F:magnesium ion binding"/>
    <property type="evidence" value="ECO:0007669"/>
    <property type="project" value="UniProtKB-UniRule"/>
</dbReference>
<dbReference type="GO" id="GO:0050661">
    <property type="term" value="F:NADP binding"/>
    <property type="evidence" value="ECO:0007669"/>
    <property type="project" value="InterPro"/>
</dbReference>
<dbReference type="GO" id="GO:0009097">
    <property type="term" value="P:isoleucine biosynthetic process"/>
    <property type="evidence" value="ECO:0007669"/>
    <property type="project" value="UniProtKB-UniRule"/>
</dbReference>
<dbReference type="GO" id="GO:0009099">
    <property type="term" value="P:L-valine biosynthetic process"/>
    <property type="evidence" value="ECO:0007669"/>
    <property type="project" value="UniProtKB-UniRule"/>
</dbReference>
<dbReference type="FunFam" id="3.40.50.720:FF:000023">
    <property type="entry name" value="Ketol-acid reductoisomerase (NADP(+))"/>
    <property type="match status" value="1"/>
</dbReference>
<dbReference type="Gene3D" id="6.10.240.10">
    <property type="match status" value="1"/>
</dbReference>
<dbReference type="Gene3D" id="3.40.50.720">
    <property type="entry name" value="NAD(P)-binding Rossmann-like Domain"/>
    <property type="match status" value="1"/>
</dbReference>
<dbReference type="HAMAP" id="MF_00435">
    <property type="entry name" value="IlvC"/>
    <property type="match status" value="1"/>
</dbReference>
<dbReference type="InterPro" id="IPR008927">
    <property type="entry name" value="6-PGluconate_DH-like_C_sf"/>
</dbReference>
<dbReference type="InterPro" id="IPR013023">
    <property type="entry name" value="KARI"/>
</dbReference>
<dbReference type="InterPro" id="IPR000506">
    <property type="entry name" value="KARI_C"/>
</dbReference>
<dbReference type="InterPro" id="IPR013116">
    <property type="entry name" value="KARI_N"/>
</dbReference>
<dbReference type="InterPro" id="IPR014359">
    <property type="entry name" value="KARI_prok"/>
</dbReference>
<dbReference type="InterPro" id="IPR036291">
    <property type="entry name" value="NAD(P)-bd_dom_sf"/>
</dbReference>
<dbReference type="NCBIfam" id="TIGR00465">
    <property type="entry name" value="ilvC"/>
    <property type="match status" value="1"/>
</dbReference>
<dbReference type="NCBIfam" id="NF004017">
    <property type="entry name" value="PRK05479.1"/>
    <property type="match status" value="1"/>
</dbReference>
<dbReference type="NCBIfam" id="NF009940">
    <property type="entry name" value="PRK13403.1"/>
    <property type="match status" value="1"/>
</dbReference>
<dbReference type="PANTHER" id="PTHR21371">
    <property type="entry name" value="KETOL-ACID REDUCTOISOMERASE, MITOCHONDRIAL"/>
    <property type="match status" value="1"/>
</dbReference>
<dbReference type="PANTHER" id="PTHR21371:SF1">
    <property type="entry name" value="KETOL-ACID REDUCTOISOMERASE, MITOCHONDRIAL"/>
    <property type="match status" value="1"/>
</dbReference>
<dbReference type="Pfam" id="PF01450">
    <property type="entry name" value="KARI_C"/>
    <property type="match status" value="1"/>
</dbReference>
<dbReference type="Pfam" id="PF07991">
    <property type="entry name" value="KARI_N"/>
    <property type="match status" value="1"/>
</dbReference>
<dbReference type="PIRSF" id="PIRSF000116">
    <property type="entry name" value="IlvC_gammaproteo"/>
    <property type="match status" value="1"/>
</dbReference>
<dbReference type="SUPFAM" id="SSF48179">
    <property type="entry name" value="6-phosphogluconate dehydrogenase C-terminal domain-like"/>
    <property type="match status" value="1"/>
</dbReference>
<dbReference type="SUPFAM" id="SSF51735">
    <property type="entry name" value="NAD(P)-binding Rossmann-fold domains"/>
    <property type="match status" value="1"/>
</dbReference>
<dbReference type="PROSITE" id="PS51851">
    <property type="entry name" value="KARI_C"/>
    <property type="match status" value="1"/>
</dbReference>
<dbReference type="PROSITE" id="PS51850">
    <property type="entry name" value="KARI_N"/>
    <property type="match status" value="1"/>
</dbReference>
<protein>
    <recommendedName>
        <fullName evidence="1">Ketol-acid reductoisomerase (NADP(+))</fullName>
        <shortName evidence="1">KARI</shortName>
        <ecNumber evidence="1">1.1.1.86</ecNumber>
    </recommendedName>
    <alternativeName>
        <fullName evidence="1">Acetohydroxy-acid isomeroreductase</fullName>
        <shortName evidence="1">AHIR</shortName>
    </alternativeName>
    <alternativeName>
        <fullName evidence="1">Alpha-keto-beta-hydroxylacyl reductoisomerase</fullName>
    </alternativeName>
    <alternativeName>
        <fullName evidence="1">Ketol-acid reductoisomerase type 1</fullName>
    </alternativeName>
    <alternativeName>
        <fullName evidence="1">Ketol-acid reductoisomerase type I</fullName>
    </alternativeName>
</protein>
<evidence type="ECO:0000255" key="1">
    <source>
        <dbReference type="HAMAP-Rule" id="MF_00435"/>
    </source>
</evidence>
<evidence type="ECO:0000255" key="2">
    <source>
        <dbReference type="PROSITE-ProRule" id="PRU01197"/>
    </source>
</evidence>
<evidence type="ECO:0000255" key="3">
    <source>
        <dbReference type="PROSITE-ProRule" id="PRU01198"/>
    </source>
</evidence>
<gene>
    <name evidence="1" type="primary">ilvC</name>
    <name type="ordered locus">LMHCC_0574</name>
</gene>
<keyword id="KW-0028">Amino-acid biosynthesis</keyword>
<keyword id="KW-0100">Branched-chain amino acid biosynthesis</keyword>
<keyword id="KW-0460">Magnesium</keyword>
<keyword id="KW-0479">Metal-binding</keyword>
<keyword id="KW-0521">NADP</keyword>
<keyword id="KW-0560">Oxidoreductase</keyword>
<feature type="chain" id="PRO_1000190974" description="Ketol-acid reductoisomerase (NADP(+))">
    <location>
        <begin position="1"/>
        <end position="331"/>
    </location>
</feature>
<feature type="domain" description="KARI N-terminal Rossmann" evidence="2">
    <location>
        <begin position="2"/>
        <end position="181"/>
    </location>
</feature>
<feature type="domain" description="KARI C-terminal knotted" evidence="3">
    <location>
        <begin position="182"/>
        <end position="327"/>
    </location>
</feature>
<feature type="active site" evidence="1">
    <location>
        <position position="107"/>
    </location>
</feature>
<feature type="binding site" evidence="1">
    <location>
        <begin position="25"/>
        <end position="28"/>
    </location>
    <ligand>
        <name>NADP(+)</name>
        <dbReference type="ChEBI" id="CHEBI:58349"/>
    </ligand>
</feature>
<feature type="binding site" evidence="1">
    <location>
        <position position="48"/>
    </location>
    <ligand>
        <name>NADP(+)</name>
        <dbReference type="ChEBI" id="CHEBI:58349"/>
    </ligand>
</feature>
<feature type="binding site" evidence="1">
    <location>
        <position position="52"/>
    </location>
    <ligand>
        <name>NADP(+)</name>
        <dbReference type="ChEBI" id="CHEBI:58349"/>
    </ligand>
</feature>
<feature type="binding site" evidence="1">
    <location>
        <begin position="82"/>
        <end position="85"/>
    </location>
    <ligand>
        <name>NADP(+)</name>
        <dbReference type="ChEBI" id="CHEBI:58349"/>
    </ligand>
</feature>
<feature type="binding site" evidence="1">
    <location>
        <position position="133"/>
    </location>
    <ligand>
        <name>NADP(+)</name>
        <dbReference type="ChEBI" id="CHEBI:58349"/>
    </ligand>
</feature>
<feature type="binding site" evidence="1">
    <location>
        <position position="190"/>
    </location>
    <ligand>
        <name>Mg(2+)</name>
        <dbReference type="ChEBI" id="CHEBI:18420"/>
        <label>1</label>
    </ligand>
</feature>
<feature type="binding site" evidence="1">
    <location>
        <position position="190"/>
    </location>
    <ligand>
        <name>Mg(2+)</name>
        <dbReference type="ChEBI" id="CHEBI:18420"/>
        <label>2</label>
    </ligand>
</feature>
<feature type="binding site" evidence="1">
    <location>
        <position position="194"/>
    </location>
    <ligand>
        <name>Mg(2+)</name>
        <dbReference type="ChEBI" id="CHEBI:18420"/>
        <label>1</label>
    </ligand>
</feature>
<feature type="binding site" evidence="1">
    <location>
        <position position="226"/>
    </location>
    <ligand>
        <name>Mg(2+)</name>
        <dbReference type="ChEBI" id="CHEBI:18420"/>
        <label>2</label>
    </ligand>
</feature>
<feature type="binding site" evidence="1">
    <location>
        <position position="230"/>
    </location>
    <ligand>
        <name>Mg(2+)</name>
        <dbReference type="ChEBI" id="CHEBI:18420"/>
        <label>2</label>
    </ligand>
</feature>
<feature type="binding site" evidence="1">
    <location>
        <position position="251"/>
    </location>
    <ligand>
        <name>substrate</name>
    </ligand>
</feature>
<comment type="function">
    <text evidence="1">Involved in the biosynthesis of branched-chain amino acids (BCAA). Catalyzes an alkyl-migration followed by a ketol-acid reduction of (S)-2-acetolactate (S2AL) to yield (R)-2,3-dihydroxy-isovalerate. In the isomerase reaction, S2AL is rearranged via a Mg-dependent methyl migration to produce 3-hydroxy-3-methyl-2-ketobutyrate (HMKB). In the reductase reaction, this 2-ketoacid undergoes a metal-dependent reduction by NADPH to yield (R)-2,3-dihydroxy-isovalerate.</text>
</comment>
<comment type="catalytic activity">
    <reaction evidence="1">
        <text>(2R)-2,3-dihydroxy-3-methylbutanoate + NADP(+) = (2S)-2-acetolactate + NADPH + H(+)</text>
        <dbReference type="Rhea" id="RHEA:22068"/>
        <dbReference type="ChEBI" id="CHEBI:15378"/>
        <dbReference type="ChEBI" id="CHEBI:49072"/>
        <dbReference type="ChEBI" id="CHEBI:57783"/>
        <dbReference type="ChEBI" id="CHEBI:58349"/>
        <dbReference type="ChEBI" id="CHEBI:58476"/>
        <dbReference type="EC" id="1.1.1.86"/>
    </reaction>
</comment>
<comment type="catalytic activity">
    <reaction evidence="1">
        <text>(2R,3R)-2,3-dihydroxy-3-methylpentanoate + NADP(+) = (S)-2-ethyl-2-hydroxy-3-oxobutanoate + NADPH + H(+)</text>
        <dbReference type="Rhea" id="RHEA:13493"/>
        <dbReference type="ChEBI" id="CHEBI:15378"/>
        <dbReference type="ChEBI" id="CHEBI:49256"/>
        <dbReference type="ChEBI" id="CHEBI:49258"/>
        <dbReference type="ChEBI" id="CHEBI:57783"/>
        <dbReference type="ChEBI" id="CHEBI:58349"/>
        <dbReference type="EC" id="1.1.1.86"/>
    </reaction>
</comment>
<comment type="cofactor">
    <cofactor evidence="1">
        <name>Mg(2+)</name>
        <dbReference type="ChEBI" id="CHEBI:18420"/>
    </cofactor>
    <text evidence="1">Binds 2 magnesium ions per subunit.</text>
</comment>
<comment type="pathway">
    <text evidence="1">Amino-acid biosynthesis; L-isoleucine biosynthesis; L-isoleucine from 2-oxobutanoate: step 2/4.</text>
</comment>
<comment type="pathway">
    <text evidence="1">Amino-acid biosynthesis; L-valine biosynthesis; L-valine from pyruvate: step 2/4.</text>
</comment>
<comment type="similarity">
    <text evidence="1">Belongs to the ketol-acid reductoisomerase family.</text>
</comment>
<name>ILVC_LISMH</name>